<comment type="function">
    <text evidence="1">Catalyzes the oxidation of 5,10-methylenetetrahydrofolate to 5,10-methenyltetrahydrofolate and then the hydrolysis of 5,10-methenyltetrahydrofolate to 10-formyltetrahydrofolate.</text>
</comment>
<comment type="catalytic activity">
    <reaction evidence="1">
        <text>(6R)-5,10-methylene-5,6,7,8-tetrahydrofolate + NADP(+) = (6R)-5,10-methenyltetrahydrofolate + NADPH</text>
        <dbReference type="Rhea" id="RHEA:22812"/>
        <dbReference type="ChEBI" id="CHEBI:15636"/>
        <dbReference type="ChEBI" id="CHEBI:57455"/>
        <dbReference type="ChEBI" id="CHEBI:57783"/>
        <dbReference type="ChEBI" id="CHEBI:58349"/>
        <dbReference type="EC" id="1.5.1.5"/>
    </reaction>
</comment>
<comment type="catalytic activity">
    <reaction evidence="1">
        <text>(6R)-5,10-methenyltetrahydrofolate + H2O = (6R)-10-formyltetrahydrofolate + H(+)</text>
        <dbReference type="Rhea" id="RHEA:23700"/>
        <dbReference type="ChEBI" id="CHEBI:15377"/>
        <dbReference type="ChEBI" id="CHEBI:15378"/>
        <dbReference type="ChEBI" id="CHEBI:57455"/>
        <dbReference type="ChEBI" id="CHEBI:195366"/>
        <dbReference type="EC" id="3.5.4.9"/>
    </reaction>
</comment>
<comment type="pathway">
    <text evidence="1">One-carbon metabolism; tetrahydrofolate interconversion.</text>
</comment>
<comment type="subunit">
    <text evidence="1">Homodimer.</text>
</comment>
<comment type="similarity">
    <text evidence="1">Belongs to the tetrahydrofolate dehydrogenase/cyclohydrolase family.</text>
</comment>
<feature type="chain" id="PRO_1000147504" description="Bifunctional protein FolD">
    <location>
        <begin position="1"/>
        <end position="301"/>
    </location>
</feature>
<feature type="binding site" evidence="1">
    <location>
        <begin position="166"/>
        <end position="168"/>
    </location>
    <ligand>
        <name>NADP(+)</name>
        <dbReference type="ChEBI" id="CHEBI:58349"/>
    </ligand>
</feature>
<feature type="binding site" evidence="1">
    <location>
        <position position="191"/>
    </location>
    <ligand>
        <name>NADP(+)</name>
        <dbReference type="ChEBI" id="CHEBI:58349"/>
    </ligand>
</feature>
<feature type="binding site" evidence="1">
    <location>
        <position position="232"/>
    </location>
    <ligand>
        <name>NADP(+)</name>
        <dbReference type="ChEBI" id="CHEBI:58349"/>
    </ligand>
</feature>
<proteinExistence type="inferred from homology"/>
<evidence type="ECO:0000255" key="1">
    <source>
        <dbReference type="HAMAP-Rule" id="MF_01576"/>
    </source>
</evidence>
<accession>B3CTT4</accession>
<protein>
    <recommendedName>
        <fullName evidence="1">Bifunctional protein FolD</fullName>
    </recommendedName>
    <domain>
        <recommendedName>
            <fullName evidence="1">Methylenetetrahydrofolate dehydrogenase</fullName>
            <ecNumber evidence="1">1.5.1.5</ecNumber>
        </recommendedName>
    </domain>
    <domain>
        <recommendedName>
            <fullName evidence="1">Methenyltetrahydrofolate cyclohydrolase</fullName>
            <ecNumber evidence="1">3.5.4.9</ecNumber>
        </recommendedName>
    </domain>
</protein>
<sequence length="301" mass="32908">MTVIMDGKKLAELRLVETKNDLLALKDKYQITVKLVIILVGNNDASLIYVNNKVAKAKAIGMDSEIIRLFEFIEEKKLLSVIDDLNCDSTVHGIIVQLPLPPHIDALKIFARIDSRKDVDGLNPINIGYLNIGANHGLIPCTALGCIDLLQYYVTDLKGKHVVVIGKSNIVGKPLSALLLRHSCTVTICHSATVDLALHTRTADIVISAVGKANFLTNKHFSGNLAFIDVGISHIYDLQTHKRKLVGDGDFLKIKDLVKFITPVPGGVGPMTVAYLLKNTLTAAKLIYASIIDNDDEKHLC</sequence>
<gene>
    <name evidence="1" type="primary">folD</name>
    <name type="ordered locus">OTT_1323</name>
</gene>
<dbReference type="EC" id="1.5.1.5" evidence="1"/>
<dbReference type="EC" id="3.5.4.9" evidence="1"/>
<dbReference type="EMBL" id="AP008981">
    <property type="protein sequence ID" value="BAG40781.1"/>
    <property type="molecule type" value="Genomic_DNA"/>
</dbReference>
<dbReference type="RefSeq" id="WP_012461829.1">
    <property type="nucleotide sequence ID" value="NC_010793.1"/>
</dbReference>
<dbReference type="SMR" id="B3CTT4"/>
<dbReference type="KEGG" id="ott:OTT_1323"/>
<dbReference type="HOGENOM" id="CLU_034045_2_0_5"/>
<dbReference type="OrthoDB" id="9803580at2"/>
<dbReference type="UniPathway" id="UPA00193"/>
<dbReference type="Proteomes" id="UP000001033">
    <property type="component" value="Chromosome"/>
</dbReference>
<dbReference type="GO" id="GO:0005829">
    <property type="term" value="C:cytosol"/>
    <property type="evidence" value="ECO:0007669"/>
    <property type="project" value="TreeGrafter"/>
</dbReference>
<dbReference type="GO" id="GO:0004477">
    <property type="term" value="F:methenyltetrahydrofolate cyclohydrolase activity"/>
    <property type="evidence" value="ECO:0007669"/>
    <property type="project" value="UniProtKB-UniRule"/>
</dbReference>
<dbReference type="GO" id="GO:0004488">
    <property type="term" value="F:methylenetetrahydrofolate dehydrogenase (NADP+) activity"/>
    <property type="evidence" value="ECO:0007669"/>
    <property type="project" value="UniProtKB-UniRule"/>
</dbReference>
<dbReference type="GO" id="GO:0000105">
    <property type="term" value="P:L-histidine biosynthetic process"/>
    <property type="evidence" value="ECO:0007669"/>
    <property type="project" value="UniProtKB-KW"/>
</dbReference>
<dbReference type="GO" id="GO:0009086">
    <property type="term" value="P:methionine biosynthetic process"/>
    <property type="evidence" value="ECO:0007669"/>
    <property type="project" value="UniProtKB-KW"/>
</dbReference>
<dbReference type="GO" id="GO:0006164">
    <property type="term" value="P:purine nucleotide biosynthetic process"/>
    <property type="evidence" value="ECO:0007669"/>
    <property type="project" value="UniProtKB-KW"/>
</dbReference>
<dbReference type="GO" id="GO:0035999">
    <property type="term" value="P:tetrahydrofolate interconversion"/>
    <property type="evidence" value="ECO:0007669"/>
    <property type="project" value="UniProtKB-UniRule"/>
</dbReference>
<dbReference type="CDD" id="cd01080">
    <property type="entry name" value="NAD_bind_m-THF_DH_Cyclohyd"/>
    <property type="match status" value="1"/>
</dbReference>
<dbReference type="FunFam" id="3.40.50.10860:FF:000005">
    <property type="entry name" value="C-1-tetrahydrofolate synthase, cytoplasmic, putative"/>
    <property type="match status" value="1"/>
</dbReference>
<dbReference type="Gene3D" id="3.40.50.10860">
    <property type="entry name" value="Leucine Dehydrogenase, chain A, domain 1"/>
    <property type="match status" value="1"/>
</dbReference>
<dbReference type="Gene3D" id="3.40.50.720">
    <property type="entry name" value="NAD(P)-binding Rossmann-like Domain"/>
    <property type="match status" value="1"/>
</dbReference>
<dbReference type="HAMAP" id="MF_01576">
    <property type="entry name" value="THF_DHG_CYH"/>
    <property type="match status" value="1"/>
</dbReference>
<dbReference type="InterPro" id="IPR046346">
    <property type="entry name" value="Aminoacid_DH-like_N_sf"/>
</dbReference>
<dbReference type="InterPro" id="IPR036291">
    <property type="entry name" value="NAD(P)-bd_dom_sf"/>
</dbReference>
<dbReference type="InterPro" id="IPR000672">
    <property type="entry name" value="THF_DH/CycHdrlase"/>
</dbReference>
<dbReference type="InterPro" id="IPR020630">
    <property type="entry name" value="THF_DH/CycHdrlase_cat_dom"/>
</dbReference>
<dbReference type="InterPro" id="IPR020867">
    <property type="entry name" value="THF_DH/CycHdrlase_CS"/>
</dbReference>
<dbReference type="InterPro" id="IPR020631">
    <property type="entry name" value="THF_DH/CycHdrlase_NAD-bd_dom"/>
</dbReference>
<dbReference type="PANTHER" id="PTHR48099:SF5">
    <property type="entry name" value="C-1-TETRAHYDROFOLATE SYNTHASE, CYTOPLASMIC"/>
    <property type="match status" value="1"/>
</dbReference>
<dbReference type="PANTHER" id="PTHR48099">
    <property type="entry name" value="C-1-TETRAHYDROFOLATE SYNTHASE, CYTOPLASMIC-RELATED"/>
    <property type="match status" value="1"/>
</dbReference>
<dbReference type="Pfam" id="PF00763">
    <property type="entry name" value="THF_DHG_CYH"/>
    <property type="match status" value="1"/>
</dbReference>
<dbReference type="Pfam" id="PF02882">
    <property type="entry name" value="THF_DHG_CYH_C"/>
    <property type="match status" value="1"/>
</dbReference>
<dbReference type="PRINTS" id="PR00085">
    <property type="entry name" value="THFDHDRGNASE"/>
</dbReference>
<dbReference type="SUPFAM" id="SSF53223">
    <property type="entry name" value="Aminoacid dehydrogenase-like, N-terminal domain"/>
    <property type="match status" value="1"/>
</dbReference>
<dbReference type="SUPFAM" id="SSF51735">
    <property type="entry name" value="NAD(P)-binding Rossmann-fold domains"/>
    <property type="match status" value="1"/>
</dbReference>
<dbReference type="PROSITE" id="PS00766">
    <property type="entry name" value="THF_DHG_CYH_1"/>
    <property type="match status" value="1"/>
</dbReference>
<dbReference type="PROSITE" id="PS00767">
    <property type="entry name" value="THF_DHG_CYH_2"/>
    <property type="match status" value="1"/>
</dbReference>
<keyword id="KW-0028">Amino-acid biosynthesis</keyword>
<keyword id="KW-0368">Histidine biosynthesis</keyword>
<keyword id="KW-0378">Hydrolase</keyword>
<keyword id="KW-0486">Methionine biosynthesis</keyword>
<keyword id="KW-0511">Multifunctional enzyme</keyword>
<keyword id="KW-0521">NADP</keyword>
<keyword id="KW-0554">One-carbon metabolism</keyword>
<keyword id="KW-0560">Oxidoreductase</keyword>
<keyword id="KW-0658">Purine biosynthesis</keyword>
<reference key="1">
    <citation type="journal article" date="2008" name="DNA Res.">
        <title>The whole-genome sequencing of the obligate intracellular bacterium Orientia tsutsugamushi revealed massive gene amplification during reductive genome evolution.</title>
        <authorList>
            <person name="Nakayama K."/>
            <person name="Yamashita A."/>
            <person name="Kurokawa K."/>
            <person name="Morimoto T."/>
            <person name="Ogawa M."/>
            <person name="Fukuhara M."/>
            <person name="Urakami H."/>
            <person name="Ohnishi M."/>
            <person name="Uchiyama I."/>
            <person name="Ogura Y."/>
            <person name="Ooka T."/>
            <person name="Oshima K."/>
            <person name="Tamura A."/>
            <person name="Hattori M."/>
            <person name="Hayashi T."/>
        </authorList>
    </citation>
    <scope>NUCLEOTIDE SEQUENCE [LARGE SCALE GENOMIC DNA]</scope>
    <source>
        <strain>Ikeda</strain>
    </source>
</reference>
<name>FOLD_ORITI</name>
<organism>
    <name type="scientific">Orientia tsutsugamushi (strain Ikeda)</name>
    <name type="common">Rickettsia tsutsugamushi</name>
    <dbReference type="NCBI Taxonomy" id="334380"/>
    <lineage>
        <taxon>Bacteria</taxon>
        <taxon>Pseudomonadati</taxon>
        <taxon>Pseudomonadota</taxon>
        <taxon>Alphaproteobacteria</taxon>
        <taxon>Rickettsiales</taxon>
        <taxon>Rickettsiaceae</taxon>
        <taxon>Rickettsieae</taxon>
        <taxon>Orientia</taxon>
    </lineage>
</organism>